<name>NHR61_CAEEL</name>
<keyword id="KW-0025">Alternative splicing</keyword>
<keyword id="KW-0238">DNA-binding</keyword>
<keyword id="KW-0479">Metal-binding</keyword>
<keyword id="KW-0539">Nucleus</keyword>
<keyword id="KW-0675">Receptor</keyword>
<keyword id="KW-1185">Reference proteome</keyword>
<keyword id="KW-0804">Transcription</keyword>
<keyword id="KW-0805">Transcription regulation</keyword>
<keyword id="KW-0862">Zinc</keyword>
<keyword id="KW-0863">Zinc-finger</keyword>
<accession>O62389</accession>
<accession>Q9U355</accession>
<comment type="function">
    <text>Orphan nuclear receptor.</text>
</comment>
<comment type="subcellular location">
    <subcellularLocation>
        <location evidence="1">Nucleus</location>
    </subcellularLocation>
</comment>
<comment type="alternative products">
    <event type="alternative splicing"/>
    <isoform>
        <id>O62389-1</id>
        <name>a</name>
        <sequence type="displayed"/>
    </isoform>
    <isoform>
        <id>O62389-2</id>
        <name>b</name>
        <sequence type="described" ref="VSP_007123"/>
    </isoform>
</comment>
<comment type="similarity">
    <text evidence="4">Belongs to the nuclear hormone receptor family.</text>
</comment>
<reference key="1">
    <citation type="journal article" date="1998" name="Science">
        <title>Genome sequence of the nematode C. elegans: a platform for investigating biology.</title>
        <authorList>
            <consortium name="The C. elegans sequencing consortium"/>
        </authorList>
    </citation>
    <scope>NUCLEOTIDE SEQUENCE [LARGE SCALE GENOMIC DNA]</scope>
    <scope>ALTERNATIVE SPLICING</scope>
    <source>
        <strain>Bristol N2</strain>
    </source>
</reference>
<organism>
    <name type="scientific">Caenorhabditis elegans</name>
    <dbReference type="NCBI Taxonomy" id="6239"/>
    <lineage>
        <taxon>Eukaryota</taxon>
        <taxon>Metazoa</taxon>
        <taxon>Ecdysozoa</taxon>
        <taxon>Nematoda</taxon>
        <taxon>Chromadorea</taxon>
        <taxon>Rhabditida</taxon>
        <taxon>Rhabditina</taxon>
        <taxon>Rhabditomorpha</taxon>
        <taxon>Rhabditoidea</taxon>
        <taxon>Rhabditidae</taxon>
        <taxon>Peloderinae</taxon>
        <taxon>Caenorhabditis</taxon>
    </lineage>
</organism>
<evidence type="ECO:0000255" key="1">
    <source>
        <dbReference type="PROSITE-ProRule" id="PRU00407"/>
    </source>
</evidence>
<evidence type="ECO:0000255" key="2">
    <source>
        <dbReference type="PROSITE-ProRule" id="PRU01189"/>
    </source>
</evidence>
<evidence type="ECO:0000256" key="3">
    <source>
        <dbReference type="SAM" id="MobiDB-lite"/>
    </source>
</evidence>
<evidence type="ECO:0000305" key="4"/>
<proteinExistence type="inferred from homology"/>
<feature type="chain" id="PRO_0000053791" description="Nuclear hormone receptor family member nhr-61">
    <location>
        <begin position="1"/>
        <end position="412"/>
    </location>
</feature>
<feature type="domain" description="NR LBD" evidence="2">
    <location>
        <begin position="144"/>
        <end position="407"/>
    </location>
</feature>
<feature type="DNA-binding region" description="Nuclear receptor" evidence="1">
    <location>
        <begin position="27"/>
        <end position="102"/>
    </location>
</feature>
<feature type="zinc finger region" description="NR C4-type" evidence="1">
    <location>
        <begin position="30"/>
        <end position="50"/>
    </location>
</feature>
<feature type="zinc finger region" description="NR C4-type" evidence="1">
    <location>
        <begin position="66"/>
        <end position="90"/>
    </location>
</feature>
<feature type="region of interest" description="Disordered" evidence="3">
    <location>
        <begin position="1"/>
        <end position="23"/>
    </location>
</feature>
<feature type="compositionally biased region" description="Low complexity" evidence="3">
    <location>
        <begin position="1"/>
        <end position="19"/>
    </location>
</feature>
<feature type="splice variant" id="VSP_007123" description="In isoform b." evidence="4">
    <original>I</original>
    <variation>IEYV</variation>
    <location>
        <position position="287"/>
    </location>
</feature>
<dbReference type="EMBL" id="Z83128">
    <property type="protein sequence ID" value="CAB05636.1"/>
    <property type="molecule type" value="Genomic_DNA"/>
</dbReference>
<dbReference type="EMBL" id="Z83128">
    <property type="protein sequence ID" value="CAB05637.1"/>
    <property type="molecule type" value="Genomic_DNA"/>
</dbReference>
<dbReference type="PIR" id="T26056">
    <property type="entry name" value="T26056"/>
</dbReference>
<dbReference type="PIR" id="T26057">
    <property type="entry name" value="T26057"/>
</dbReference>
<dbReference type="RefSeq" id="NP_001022381.1">
    <molecule id="O62389-1"/>
    <property type="nucleotide sequence ID" value="NM_001027210.8"/>
</dbReference>
<dbReference type="RefSeq" id="NP_001022382.1">
    <molecule id="O62389-2"/>
    <property type="nucleotide sequence ID" value="NM_001027211.6"/>
</dbReference>
<dbReference type="SMR" id="O62389"/>
<dbReference type="BioGRID" id="40423">
    <property type="interactions" value="2"/>
</dbReference>
<dbReference type="DIP" id="DIP-24810N"/>
<dbReference type="FunCoup" id="O62389">
    <property type="interactions" value="2"/>
</dbReference>
<dbReference type="IntAct" id="O62389">
    <property type="interactions" value="2"/>
</dbReference>
<dbReference type="STRING" id="6239.W01D2.2b.3"/>
<dbReference type="PaxDb" id="6239-W01D2.2b.1"/>
<dbReference type="EnsemblMetazoa" id="W01D2.2a.1">
    <molecule id="O62389-1"/>
    <property type="protein sequence ID" value="W01D2.2a.1"/>
    <property type="gene ID" value="WBGene00003651"/>
</dbReference>
<dbReference type="EnsemblMetazoa" id="W01D2.2b.1">
    <molecule id="O62389-2"/>
    <property type="protein sequence ID" value="W01D2.2b.1"/>
    <property type="gene ID" value="WBGene00003651"/>
</dbReference>
<dbReference type="GeneID" id="175142"/>
<dbReference type="KEGG" id="cel:CELE_W01D2.2"/>
<dbReference type="UCSC" id="W01D2.2a">
    <molecule id="O62389-1"/>
    <property type="organism name" value="c. elegans"/>
</dbReference>
<dbReference type="AGR" id="WB:WBGene00003651"/>
<dbReference type="CTD" id="175142"/>
<dbReference type="WormBase" id="W01D2.2a">
    <molecule id="O62389-1"/>
    <property type="protein sequence ID" value="CE20124"/>
    <property type="gene ID" value="WBGene00003651"/>
    <property type="gene designation" value="nhr-61"/>
</dbReference>
<dbReference type="WormBase" id="W01D2.2b">
    <molecule id="O62389-2"/>
    <property type="protein sequence ID" value="CE20125"/>
    <property type="gene ID" value="WBGene00003651"/>
    <property type="gene designation" value="nhr-61"/>
</dbReference>
<dbReference type="eggNOG" id="KOG3575">
    <property type="taxonomic scope" value="Eukaryota"/>
</dbReference>
<dbReference type="HOGENOM" id="CLU_007368_3_3_1"/>
<dbReference type="InParanoid" id="O62389"/>
<dbReference type="OMA" id="WWLCSTW"/>
<dbReference type="OrthoDB" id="5817395at2759"/>
<dbReference type="PhylomeDB" id="O62389"/>
<dbReference type="PRO" id="PR:O62389"/>
<dbReference type="Proteomes" id="UP000001940">
    <property type="component" value="Chromosome II"/>
</dbReference>
<dbReference type="Bgee" id="WBGene00003651">
    <property type="expression patterns" value="Expressed in pharyngeal muscle cell (C elegans) and 4 other cell types or tissues"/>
</dbReference>
<dbReference type="ExpressionAtlas" id="O62389">
    <property type="expression patterns" value="baseline and differential"/>
</dbReference>
<dbReference type="GO" id="GO:0005634">
    <property type="term" value="C:nucleus"/>
    <property type="evidence" value="ECO:0007669"/>
    <property type="project" value="UniProtKB-SubCell"/>
</dbReference>
<dbReference type="GO" id="GO:0003700">
    <property type="term" value="F:DNA-binding transcription factor activity"/>
    <property type="evidence" value="ECO:0007669"/>
    <property type="project" value="InterPro"/>
</dbReference>
<dbReference type="GO" id="GO:0000978">
    <property type="term" value="F:RNA polymerase II cis-regulatory region sequence-specific DNA binding"/>
    <property type="evidence" value="ECO:0007669"/>
    <property type="project" value="InterPro"/>
</dbReference>
<dbReference type="GO" id="GO:0008270">
    <property type="term" value="F:zinc ion binding"/>
    <property type="evidence" value="ECO:0007669"/>
    <property type="project" value="UniProtKB-KW"/>
</dbReference>
<dbReference type="GO" id="GO:0006355">
    <property type="term" value="P:regulation of DNA-templated transcription"/>
    <property type="evidence" value="ECO:0000318"/>
    <property type="project" value="GO_Central"/>
</dbReference>
<dbReference type="CDD" id="cd06960">
    <property type="entry name" value="NR_DBD_HNF4A"/>
    <property type="match status" value="1"/>
</dbReference>
<dbReference type="FunFam" id="3.30.50.10:FF:000030">
    <property type="entry name" value="Nuclear Hormone Receptor family"/>
    <property type="match status" value="1"/>
</dbReference>
<dbReference type="Gene3D" id="3.30.50.10">
    <property type="entry name" value="Erythroid Transcription Factor GATA-1, subunit A"/>
    <property type="match status" value="1"/>
</dbReference>
<dbReference type="Gene3D" id="1.10.565.10">
    <property type="entry name" value="Retinoid X Receptor"/>
    <property type="match status" value="1"/>
</dbReference>
<dbReference type="InterPro" id="IPR052499">
    <property type="entry name" value="C.elegans_NHRs"/>
</dbReference>
<dbReference type="InterPro" id="IPR049636">
    <property type="entry name" value="HNF4-like_DBD"/>
</dbReference>
<dbReference type="InterPro" id="IPR035500">
    <property type="entry name" value="NHR-like_dom_sf"/>
</dbReference>
<dbReference type="InterPro" id="IPR000536">
    <property type="entry name" value="Nucl_hrmn_rcpt_lig-bd"/>
</dbReference>
<dbReference type="InterPro" id="IPR002999">
    <property type="entry name" value="Tudor"/>
</dbReference>
<dbReference type="InterPro" id="IPR001628">
    <property type="entry name" value="Znf_hrmn_rcpt"/>
</dbReference>
<dbReference type="InterPro" id="IPR013088">
    <property type="entry name" value="Znf_NHR/GATA"/>
</dbReference>
<dbReference type="PANTHER" id="PTHR47630:SF2">
    <property type="entry name" value="NUCLEAR HORMONE RECEPTOR FAMILY MEMBER NHR-61"/>
    <property type="match status" value="1"/>
</dbReference>
<dbReference type="PANTHER" id="PTHR47630">
    <property type="entry name" value="NUCLEAR HORMONE RECEPTOR FAMILY-RELATED-RELATED"/>
    <property type="match status" value="1"/>
</dbReference>
<dbReference type="Pfam" id="PF00104">
    <property type="entry name" value="Hormone_recep"/>
    <property type="match status" value="1"/>
</dbReference>
<dbReference type="Pfam" id="PF00105">
    <property type="entry name" value="zf-C4"/>
    <property type="match status" value="1"/>
</dbReference>
<dbReference type="PRINTS" id="PR00047">
    <property type="entry name" value="STROIDFINGER"/>
</dbReference>
<dbReference type="SMART" id="SM00430">
    <property type="entry name" value="HOLI"/>
    <property type="match status" value="1"/>
</dbReference>
<dbReference type="SMART" id="SM00399">
    <property type="entry name" value="ZnF_C4"/>
    <property type="match status" value="1"/>
</dbReference>
<dbReference type="SUPFAM" id="SSF57716">
    <property type="entry name" value="Glucocorticoid receptor-like (DNA-binding domain)"/>
    <property type="match status" value="1"/>
</dbReference>
<dbReference type="SUPFAM" id="SSF48508">
    <property type="entry name" value="Nuclear receptor ligand-binding domain"/>
    <property type="match status" value="1"/>
</dbReference>
<dbReference type="PROSITE" id="PS51843">
    <property type="entry name" value="NR_LBD"/>
    <property type="match status" value="1"/>
</dbReference>
<dbReference type="PROSITE" id="PS00031">
    <property type="entry name" value="NUCLEAR_REC_DBD_1"/>
    <property type="match status" value="1"/>
</dbReference>
<dbReference type="PROSITE" id="PS51030">
    <property type="entry name" value="NUCLEAR_REC_DBD_2"/>
    <property type="match status" value="1"/>
</dbReference>
<sequence>MIVDSISSSTASTSSSSPTRGTPIRKSLQCAVCGDVALGKHYGVNACNGCKGFFRRSIWKNRTYACRHGGKCLVAKEQRNACRSCRLTRCLDVGMNPRAVQGDTVEDPEWDEEAMPETLSISTQTDALKVKKKSHTSLFTLDIKKEQIIDNLRAIYARTDPEEFWKLTYPGTYDFRYAFHNTKVVSPRTPLTPTAERIATLNDVVADFRRAFVLFVDILKSIDQLRDVQEDDKMKIAKSRFAAFYWWLCSTWSAKAGCNGVCYSNGSYHPASISDMPKSEGKHGVRIDYSGVSQKSLENLVEPLRRMELSDEERIVGAVMVILADPVPNVSTKTEKILAEARDFYLELLGYCIKLPEEQQGIRVSTMVLLLASIMELVHLTTDNIQLSDVLHVIDLGDWSQELRDHRYRRQF</sequence>
<gene>
    <name type="primary">nhr-61</name>
    <name type="ORF">W01D2.2</name>
</gene>
<protein>
    <recommendedName>
        <fullName>Nuclear hormone receptor family member nhr-61</fullName>
    </recommendedName>
</protein>